<gene>
    <name evidence="13" type="primary">LIG6</name>
    <name evidence="16" type="ordered locus">At1g66730</name>
    <name evidence="17" type="ORF">F4N21.14</name>
</gene>
<name>LIG6_ARATH</name>
<dbReference type="EC" id="6.5.1.1" evidence="3 6"/>
<dbReference type="EMBL" id="AC013288">
    <property type="protein sequence ID" value="AAG60081.1"/>
    <property type="status" value="ALT_SEQ"/>
    <property type="molecule type" value="Genomic_DNA"/>
</dbReference>
<dbReference type="EMBL" id="CP002684">
    <property type="protein sequence ID" value="AEE34549.1"/>
    <property type="molecule type" value="Genomic_DNA"/>
</dbReference>
<dbReference type="RefSeq" id="NP_176845.2">
    <property type="nucleotide sequence ID" value="NM_105343.3"/>
</dbReference>
<dbReference type="SMR" id="F4HPZ9"/>
<dbReference type="FunCoup" id="F4HPZ9">
    <property type="interactions" value="91"/>
</dbReference>
<dbReference type="STRING" id="3702.F4HPZ9"/>
<dbReference type="GlyGen" id="F4HPZ9">
    <property type="glycosylation" value="1 site"/>
</dbReference>
<dbReference type="iPTMnet" id="F4HPZ9"/>
<dbReference type="PaxDb" id="3702-AT1G66730.1"/>
<dbReference type="ProteomicsDB" id="238450"/>
<dbReference type="EnsemblPlants" id="AT1G66730.1">
    <property type="protein sequence ID" value="AT1G66730.1"/>
    <property type="gene ID" value="AT1G66730"/>
</dbReference>
<dbReference type="GeneID" id="842991"/>
<dbReference type="Gramene" id="AT1G66730.1">
    <property type="protein sequence ID" value="AT1G66730.1"/>
    <property type="gene ID" value="AT1G66730"/>
</dbReference>
<dbReference type="KEGG" id="ath:AT1G66730"/>
<dbReference type="Araport" id="AT1G66730"/>
<dbReference type="TAIR" id="AT1G66730">
    <property type="gene designation" value="LIG6"/>
</dbReference>
<dbReference type="eggNOG" id="KOG0967">
    <property type="taxonomic scope" value="Eukaryota"/>
</dbReference>
<dbReference type="eggNOG" id="KOG1361">
    <property type="taxonomic scope" value="Eukaryota"/>
</dbReference>
<dbReference type="HOGENOM" id="CLU_005138_3_0_1"/>
<dbReference type="InParanoid" id="F4HPZ9"/>
<dbReference type="OMA" id="IAEMFHS"/>
<dbReference type="BRENDA" id="6.5.1.1">
    <property type="organism ID" value="399"/>
</dbReference>
<dbReference type="PRO" id="PR:F4HPZ9"/>
<dbReference type="Proteomes" id="UP000006548">
    <property type="component" value="Chromosome 1"/>
</dbReference>
<dbReference type="ExpressionAtlas" id="F4HPZ9">
    <property type="expression patterns" value="baseline and differential"/>
</dbReference>
<dbReference type="GO" id="GO:0005634">
    <property type="term" value="C:nucleus"/>
    <property type="evidence" value="ECO:0007669"/>
    <property type="project" value="UniProtKB-SubCell"/>
</dbReference>
<dbReference type="GO" id="GO:0005524">
    <property type="term" value="F:ATP binding"/>
    <property type="evidence" value="ECO:0007669"/>
    <property type="project" value="UniProtKB-KW"/>
</dbReference>
<dbReference type="GO" id="GO:0003677">
    <property type="term" value="F:DNA binding"/>
    <property type="evidence" value="ECO:0007669"/>
    <property type="project" value="InterPro"/>
</dbReference>
<dbReference type="GO" id="GO:0003910">
    <property type="term" value="F:DNA ligase (ATP) activity"/>
    <property type="evidence" value="ECO:0007669"/>
    <property type="project" value="UniProtKB-EC"/>
</dbReference>
<dbReference type="GO" id="GO:0046872">
    <property type="term" value="F:metal ion binding"/>
    <property type="evidence" value="ECO:0007669"/>
    <property type="project" value="UniProtKB-KW"/>
</dbReference>
<dbReference type="GO" id="GO:0071897">
    <property type="term" value="P:DNA biosynthetic process"/>
    <property type="evidence" value="ECO:0007669"/>
    <property type="project" value="InterPro"/>
</dbReference>
<dbReference type="GO" id="GO:0015074">
    <property type="term" value="P:DNA integration"/>
    <property type="evidence" value="ECO:0000315"/>
    <property type="project" value="UniProtKB"/>
</dbReference>
<dbReference type="GO" id="GO:0006310">
    <property type="term" value="P:DNA recombination"/>
    <property type="evidence" value="ECO:0007669"/>
    <property type="project" value="UniProtKB-KW"/>
</dbReference>
<dbReference type="GO" id="GO:0006281">
    <property type="term" value="P:DNA repair"/>
    <property type="evidence" value="ECO:0000315"/>
    <property type="project" value="UniProtKB"/>
</dbReference>
<dbReference type="GO" id="GO:0006260">
    <property type="term" value="P:DNA replication"/>
    <property type="evidence" value="ECO:0007669"/>
    <property type="project" value="UniProtKB-KW"/>
</dbReference>
<dbReference type="GO" id="GO:0006303">
    <property type="term" value="P:double-strand break repair via nonhomologous end joining"/>
    <property type="evidence" value="ECO:0000315"/>
    <property type="project" value="TAIR"/>
</dbReference>
<dbReference type="GO" id="GO:2000685">
    <property type="term" value="P:positive regulation of cellular response to X-ray"/>
    <property type="evidence" value="ECO:0000315"/>
    <property type="project" value="UniProtKB"/>
</dbReference>
<dbReference type="GO" id="GO:1904975">
    <property type="term" value="P:response to bleomycin"/>
    <property type="evidence" value="ECO:0000270"/>
    <property type="project" value="UniProtKB"/>
</dbReference>
<dbReference type="GO" id="GO:0009409">
    <property type="term" value="P:response to cold"/>
    <property type="evidence" value="ECO:0000315"/>
    <property type="project" value="UniProtKB"/>
</dbReference>
<dbReference type="GO" id="GO:0002237">
    <property type="term" value="P:response to molecule of bacterial origin"/>
    <property type="evidence" value="ECO:0000315"/>
    <property type="project" value="UniProtKB"/>
</dbReference>
<dbReference type="GO" id="GO:0006979">
    <property type="term" value="P:response to oxidative stress"/>
    <property type="evidence" value="ECO:0000315"/>
    <property type="project" value="UniProtKB"/>
</dbReference>
<dbReference type="GO" id="GO:0010225">
    <property type="term" value="P:response to UV-C"/>
    <property type="evidence" value="ECO:0000314"/>
    <property type="project" value="UniProtKB"/>
</dbReference>
<dbReference type="GO" id="GO:0048316">
    <property type="term" value="P:seed development"/>
    <property type="evidence" value="ECO:0000315"/>
    <property type="project" value="UniProtKB"/>
</dbReference>
<dbReference type="GO" id="GO:0009845">
    <property type="term" value="P:seed germination"/>
    <property type="evidence" value="ECO:0000315"/>
    <property type="project" value="TAIR"/>
</dbReference>
<dbReference type="CDD" id="cd07900">
    <property type="entry name" value="Adenylation_DNA_ligase_I_Euk"/>
    <property type="match status" value="1"/>
</dbReference>
<dbReference type="CDD" id="cd07969">
    <property type="entry name" value="OBF_DNA_ligase_I"/>
    <property type="match status" value="1"/>
</dbReference>
<dbReference type="CDD" id="cd16273">
    <property type="entry name" value="SNM1A-1C-like_MBL-fold"/>
    <property type="match status" value="1"/>
</dbReference>
<dbReference type="FunFam" id="1.10.3260.10:FF:000006">
    <property type="entry name" value="DNA ligase"/>
    <property type="match status" value="1"/>
</dbReference>
<dbReference type="FunFam" id="2.40.50.140:FF:000220">
    <property type="entry name" value="DNA ligase"/>
    <property type="match status" value="1"/>
</dbReference>
<dbReference type="FunFam" id="3.30.470.30:FF:000002">
    <property type="entry name" value="DNA ligase"/>
    <property type="match status" value="1"/>
</dbReference>
<dbReference type="FunFam" id="3.40.50.12650:FF:000006">
    <property type="entry name" value="DNA ligase"/>
    <property type="match status" value="1"/>
</dbReference>
<dbReference type="FunFam" id="3.60.15.10:FF:000027">
    <property type="entry name" value="DNA ligase 6"/>
    <property type="match status" value="1"/>
</dbReference>
<dbReference type="Gene3D" id="3.30.1490.70">
    <property type="match status" value="1"/>
</dbReference>
<dbReference type="Gene3D" id="3.40.50.12650">
    <property type="match status" value="1"/>
</dbReference>
<dbReference type="Gene3D" id="1.10.3260.10">
    <property type="entry name" value="DNA ligase, ATP-dependent, N-terminal domain"/>
    <property type="match status" value="1"/>
</dbReference>
<dbReference type="Gene3D" id="3.30.470.30">
    <property type="entry name" value="DNA ligase/mRNA capping enzyme"/>
    <property type="match status" value="1"/>
</dbReference>
<dbReference type="Gene3D" id="2.40.50.140">
    <property type="entry name" value="Nucleic acid-binding proteins"/>
    <property type="match status" value="1"/>
</dbReference>
<dbReference type="Gene3D" id="3.60.15.10">
    <property type="entry name" value="Ribonuclease Z/Hydroxyacylglutathione hydrolase-like"/>
    <property type="match status" value="1"/>
</dbReference>
<dbReference type="InterPro" id="IPR050191">
    <property type="entry name" value="ATP-dep_DNA_ligase"/>
</dbReference>
<dbReference type="InterPro" id="IPR000977">
    <property type="entry name" value="DNA_ligase_ATP-dep"/>
</dbReference>
<dbReference type="InterPro" id="IPR012309">
    <property type="entry name" value="DNA_ligase_ATP-dep_C"/>
</dbReference>
<dbReference type="InterPro" id="IPR012310">
    <property type="entry name" value="DNA_ligase_ATP-dep_cent"/>
</dbReference>
<dbReference type="InterPro" id="IPR016059">
    <property type="entry name" value="DNA_ligase_ATP-dep_CS"/>
</dbReference>
<dbReference type="InterPro" id="IPR012308">
    <property type="entry name" value="DNA_ligase_ATP-dep_N"/>
</dbReference>
<dbReference type="InterPro" id="IPR036599">
    <property type="entry name" value="DNA_ligase_N_sf"/>
</dbReference>
<dbReference type="InterPro" id="IPR011084">
    <property type="entry name" value="DRMBL"/>
</dbReference>
<dbReference type="InterPro" id="IPR012340">
    <property type="entry name" value="NA-bd_OB-fold"/>
</dbReference>
<dbReference type="InterPro" id="IPR036866">
    <property type="entry name" value="RibonucZ/Hydroxyglut_hydro"/>
</dbReference>
<dbReference type="NCBIfam" id="TIGR00574">
    <property type="entry name" value="dnl1"/>
    <property type="match status" value="1"/>
</dbReference>
<dbReference type="PANTHER" id="PTHR45674">
    <property type="entry name" value="DNA LIGASE 1/3 FAMILY MEMBER"/>
    <property type="match status" value="1"/>
</dbReference>
<dbReference type="PANTHER" id="PTHR45674:SF9">
    <property type="entry name" value="DNA LIGASE 3"/>
    <property type="match status" value="1"/>
</dbReference>
<dbReference type="Pfam" id="PF04679">
    <property type="entry name" value="DNA_ligase_A_C"/>
    <property type="match status" value="1"/>
</dbReference>
<dbReference type="Pfam" id="PF01068">
    <property type="entry name" value="DNA_ligase_A_M"/>
    <property type="match status" value="1"/>
</dbReference>
<dbReference type="Pfam" id="PF04675">
    <property type="entry name" value="DNA_ligase_A_N"/>
    <property type="match status" value="1"/>
</dbReference>
<dbReference type="Pfam" id="PF07522">
    <property type="entry name" value="DRMBL"/>
    <property type="match status" value="1"/>
</dbReference>
<dbReference type="SUPFAM" id="SSF117018">
    <property type="entry name" value="ATP-dependent DNA ligase DNA-binding domain"/>
    <property type="match status" value="1"/>
</dbReference>
<dbReference type="SUPFAM" id="SSF56091">
    <property type="entry name" value="DNA ligase/mRNA capping enzyme, catalytic domain"/>
    <property type="match status" value="1"/>
</dbReference>
<dbReference type="SUPFAM" id="SSF56281">
    <property type="entry name" value="Metallo-hydrolase/oxidoreductase"/>
    <property type="match status" value="1"/>
</dbReference>
<dbReference type="SUPFAM" id="SSF50249">
    <property type="entry name" value="Nucleic acid-binding proteins"/>
    <property type="match status" value="1"/>
</dbReference>
<dbReference type="PROSITE" id="PS00697">
    <property type="entry name" value="DNA_LIGASE_A1"/>
    <property type="match status" value="1"/>
</dbReference>
<dbReference type="PROSITE" id="PS50160">
    <property type="entry name" value="DNA_LIGASE_A3"/>
    <property type="match status" value="1"/>
</dbReference>
<feature type="chain" id="PRO_0000436440" description="DNA ligase 6" evidence="4">
    <location>
        <begin position="1"/>
        <end position="1396"/>
    </location>
</feature>
<feature type="region of interest" description="Disordered" evidence="7">
    <location>
        <begin position="441"/>
        <end position="464"/>
    </location>
</feature>
<feature type="region of interest" description="Disordered" evidence="7">
    <location>
        <begin position="562"/>
        <end position="599"/>
    </location>
</feature>
<feature type="short sequence motif" description="Nuclear localization signal 1" evidence="5">
    <location>
        <begin position="572"/>
        <end position="579"/>
    </location>
</feature>
<feature type="short sequence motif" description="Nuclear localization signal 2" evidence="5">
    <location>
        <begin position="886"/>
        <end position="893"/>
    </location>
</feature>
<feature type="active site" description="N6-AMP-lysine intermediate" evidence="3 6">
    <location>
        <position position="1039"/>
    </location>
</feature>
<feature type="binding site" evidence="3">
    <location>
        <position position="1037"/>
    </location>
    <ligand>
        <name>ATP</name>
        <dbReference type="ChEBI" id="CHEBI:30616"/>
    </ligand>
</feature>
<feature type="binding site" evidence="3">
    <location>
        <position position="1044"/>
    </location>
    <ligand>
        <name>ATP</name>
        <dbReference type="ChEBI" id="CHEBI:30616"/>
    </ligand>
</feature>
<feature type="binding site" evidence="3">
    <location>
        <position position="1060"/>
    </location>
    <ligand>
        <name>ATP</name>
        <dbReference type="ChEBI" id="CHEBI:30616"/>
    </ligand>
</feature>
<feature type="binding site" evidence="3">
    <location>
        <position position="1092"/>
    </location>
    <ligand>
        <name>ATP</name>
        <dbReference type="ChEBI" id="CHEBI:30616"/>
    </ligand>
</feature>
<feature type="binding site" evidence="2">
    <location>
        <position position="1092"/>
    </location>
    <ligand>
        <name>Mg(2+)</name>
        <dbReference type="ChEBI" id="CHEBI:18420"/>
        <label>1</label>
    </ligand>
</feature>
<feature type="binding site" evidence="3">
    <location>
        <position position="1136"/>
    </location>
    <ligand>
        <name>ATP</name>
        <dbReference type="ChEBI" id="CHEBI:30616"/>
    </ligand>
</feature>
<feature type="binding site" evidence="2">
    <location>
        <position position="1207"/>
    </location>
    <ligand>
        <name>Mg(2+)</name>
        <dbReference type="ChEBI" id="CHEBI:18420"/>
        <label>2</label>
    </ligand>
</feature>
<feature type="binding site" evidence="2">
    <location>
        <position position="1212"/>
    </location>
    <ligand>
        <name>ATP</name>
        <dbReference type="ChEBI" id="CHEBI:30616"/>
    </ligand>
</feature>
<feature type="binding site" evidence="1">
    <location>
        <position position="1225"/>
    </location>
    <ligand>
        <name>ATP</name>
        <dbReference type="ChEBI" id="CHEBI:30616"/>
    </ligand>
</feature>
<feature type="binding site" evidence="3">
    <location>
        <position position="1231"/>
    </location>
    <ligand>
        <name>ATP</name>
        <dbReference type="ChEBI" id="CHEBI:30616"/>
    </ligand>
</feature>
<reference key="1">
    <citation type="journal article" date="2000" name="Nature">
        <title>Sequence and analysis of chromosome 1 of the plant Arabidopsis thaliana.</title>
        <authorList>
            <person name="Theologis A."/>
            <person name="Ecker J.R."/>
            <person name="Palm C.J."/>
            <person name="Federspiel N.A."/>
            <person name="Kaul S."/>
            <person name="White O."/>
            <person name="Alonso J."/>
            <person name="Altafi H."/>
            <person name="Araujo R."/>
            <person name="Bowman C.L."/>
            <person name="Brooks S.Y."/>
            <person name="Buehler E."/>
            <person name="Chan A."/>
            <person name="Chao Q."/>
            <person name="Chen H."/>
            <person name="Cheuk R.F."/>
            <person name="Chin C.W."/>
            <person name="Chung M.K."/>
            <person name="Conn L."/>
            <person name="Conway A.B."/>
            <person name="Conway A.R."/>
            <person name="Creasy T.H."/>
            <person name="Dewar K."/>
            <person name="Dunn P."/>
            <person name="Etgu P."/>
            <person name="Feldblyum T.V."/>
            <person name="Feng J.-D."/>
            <person name="Fong B."/>
            <person name="Fujii C.Y."/>
            <person name="Gill J.E."/>
            <person name="Goldsmith A.D."/>
            <person name="Haas B."/>
            <person name="Hansen N.F."/>
            <person name="Hughes B."/>
            <person name="Huizar L."/>
            <person name="Hunter J.L."/>
            <person name="Jenkins J."/>
            <person name="Johnson-Hopson C."/>
            <person name="Khan S."/>
            <person name="Khaykin E."/>
            <person name="Kim C.J."/>
            <person name="Koo H.L."/>
            <person name="Kremenetskaia I."/>
            <person name="Kurtz D.B."/>
            <person name="Kwan A."/>
            <person name="Lam B."/>
            <person name="Langin-Hooper S."/>
            <person name="Lee A."/>
            <person name="Lee J.M."/>
            <person name="Lenz C.A."/>
            <person name="Li J.H."/>
            <person name="Li Y.-P."/>
            <person name="Lin X."/>
            <person name="Liu S.X."/>
            <person name="Liu Z.A."/>
            <person name="Luros J.S."/>
            <person name="Maiti R."/>
            <person name="Marziali A."/>
            <person name="Militscher J."/>
            <person name="Miranda M."/>
            <person name="Nguyen M."/>
            <person name="Nierman W.C."/>
            <person name="Osborne B.I."/>
            <person name="Pai G."/>
            <person name="Peterson J."/>
            <person name="Pham P.K."/>
            <person name="Rizzo M."/>
            <person name="Rooney T."/>
            <person name="Rowley D."/>
            <person name="Sakano H."/>
            <person name="Salzberg S.L."/>
            <person name="Schwartz J.R."/>
            <person name="Shinn P."/>
            <person name="Southwick A.M."/>
            <person name="Sun H."/>
            <person name="Tallon L.J."/>
            <person name="Tambunga G."/>
            <person name="Toriumi M.J."/>
            <person name="Town C.D."/>
            <person name="Utterback T."/>
            <person name="Van Aken S."/>
            <person name="Vaysberg M."/>
            <person name="Vysotskaia V.S."/>
            <person name="Walker M."/>
            <person name="Wu D."/>
            <person name="Yu G."/>
            <person name="Fraser C.M."/>
            <person name="Venter J.C."/>
            <person name="Davis R.W."/>
        </authorList>
    </citation>
    <scope>NUCLEOTIDE SEQUENCE [LARGE SCALE GENOMIC DNA]</scope>
    <source>
        <strain>cv. Columbia</strain>
    </source>
</reference>
<reference key="2">
    <citation type="journal article" date="2017" name="Plant J.">
        <title>Araport11: a complete reannotation of the Arabidopsis thaliana reference genome.</title>
        <authorList>
            <person name="Cheng C.Y."/>
            <person name="Krishnakumar V."/>
            <person name="Chan A.P."/>
            <person name="Thibaud-Nissen F."/>
            <person name="Schobel S."/>
            <person name="Town C.D."/>
        </authorList>
    </citation>
    <scope>GENOME REANNOTATION</scope>
    <source>
        <strain>cv. Columbia</strain>
    </source>
</reference>
<reference key="3">
    <citation type="journal article" date="2002" name="J. Biol. Chem.">
        <title>A nick-sensing DNA 3'-repair enzyme from Arabidopsis.</title>
        <authorList>
            <person name="Petrucco S."/>
            <person name="Volpi G."/>
            <person name="Bolchi A."/>
            <person name="Rivetti C."/>
            <person name="Ottonello S."/>
        </authorList>
    </citation>
    <scope>IDENTIFICATION</scope>
</reference>
<reference key="4">
    <citation type="journal article" date="2004" name="Plant Cell">
        <title>CENTRIN2 modulates homologous recombination and nucleotide excision repair in Arabidopsis.</title>
        <authorList>
            <person name="Molinier J."/>
            <person name="Ramos C."/>
            <person name="Fritsch O."/>
            <person name="Hohn B."/>
        </authorList>
    </citation>
    <scope>INDUCTION BY UV-C</scope>
    <source>
        <strain>cv. Columbia</strain>
    </source>
</reference>
<reference key="5">
    <citation type="journal article" date="2010" name="Plant J.">
        <title>A plant DNA ligase is an important determinant of seed longevity.</title>
        <authorList>
            <person name="Waterworth W.M."/>
            <person name="Masnavi G."/>
            <person name="Bhardwaj R.M."/>
            <person name="Jiang Q."/>
            <person name="Bray C.M."/>
            <person name="West C.E."/>
        </authorList>
    </citation>
    <scope>FUNCTION</scope>
    <scope>DISRUPTION PHENOTYPE</scope>
    <scope>TISSUE SPECIFICITY</scope>
    <scope>INDUCTION BY IMBIBITION</scope>
    <source>
        <strain>cv. Columbia</strain>
    </source>
</reference>
<reference key="6">
    <citation type="journal article" date="2015" name="Front. Plant Sci.">
        <title>Arabidopsis DNA polymerase lambda mutant is mildly sensitive to DNA double strand breaks but defective in integration of a transgene.</title>
        <authorList>
            <person name="Furukawa T."/>
            <person name="Angelis K.J."/>
            <person name="Britt A.B."/>
        </authorList>
    </citation>
    <scope>INDUCTION BY BLEOMYCIN</scope>
</reference>
<reference key="7">
    <citation type="journal article" date="2015" name="Plant J.">
        <title>Agrobacterium T-DNA integration into the plant genome can occur without the activity of key non-homologous end-joining proteins.</title>
        <authorList>
            <person name="Park S.-Y."/>
            <person name="Vaghchhipawala Z."/>
            <person name="Vasudevan B."/>
            <person name="Lee L.-Y."/>
            <person name="Shen Y."/>
            <person name="Singer K."/>
            <person name="Waterworth W.M."/>
            <person name="Zhang Z.J."/>
            <person name="West C.E."/>
            <person name="Mysore K.S."/>
            <person name="Gelvin S.B."/>
        </authorList>
    </citation>
    <scope>FUNCTION</scope>
    <scope>DISRUPTION PHENOTYPE</scope>
    <source>
        <strain>cv. Columbia</strain>
    </source>
</reference>
<sequence length="1396" mass="156322">MASDSAGATISGNFSNSDNSETLNLNTTKLYSSAISSISPQFPSPKPTSSCPSIPNSKRIPNTNFIVDLFRLPHQSSSVAFFLSHFHSDHYSGLSSSWSKGIIYCSHKTARLVAEILQVPSQFVFALPMNQMVKIDGSEVVLIEANHCPGAVQFLFKVKLESSGFEKYVHTGDFRFCDEMRFDPFLNGFVGCDGVFLDTTYCNPKFVFPSQEESVGYVVSVIDKISEEKVLFLVATYVVGKEKILVEIARRCKRKIVVDARKMSMLSVLGCGEEGMFTEDENESDVHVVGWNVLGETWPYFRPNFVKMNEIMVEKGYDKVVGFVPTGWTYEVKRNKFAVRFKDSMEIHLVPYSEHSNYDELREFIKFLKPKRVIPTVGVDIEKFDCKEVNKMQKHFSGLVDEMANKKDFLLGFYRQSYQKNEKSDVDVVSHSAEVYEEEEKNACEDGGENVPSSRGPILHDTTPSSDSRLLIKLRDSLPAWVTEEQMLDLIKKHAGNPVDIVSNFYEYEAELYKQASLPTPSLNNQAVLFDDDVTDLQPNPVKGICPDVQAIQKGFDLPRKMNLTKGTISPGKRGKSSGSKSNKKAKKDPKSKPVGPGQPTLFKFFNKVLDGGSNSVSVGSETEECNTDKKMVHIDASEAYKEVTDQFIDIVNGSESLRDYAASIIDEAKGDISRALNIYYSKPREIPGDHAGERGLSSKTIQYPKCSEACSSQEDKKASENSGHAVNICVQTSAEESVDKNYVSLPPEKYQPKEHACWREGQPAPYIHLVRTFASVESEKGKIKAMSMLCNMFRSLFALSPEDVLPAVYLCTNKIAADHENIELNIGGSLISSALEEACGISRSTVRDMYNSLGDLGDVAQLCRQTQKLLVPPPPLLVRDVFSTLRKISVQTGTGSTRLKKNLIVKLMRSCREKEIKFLVRTLARNLRIGAMLRTVLPALGRAIVMNSFWNDHNKELSESCFREKLEGVSAAVVEAYNILPSLDVVVPSLMDKDIEFSTSTLSMVPGIPIKPMLAKIAKGVQEFFNLSQEKAFTCEYKYDGQRAQIHKLLDGTVCIFSRNGDETTSRFPDLVDVIKQFSCPAAETFMLDAEVVATDRINGNKLMSFQELSTRERGSKDALITTESIKVEVCVFVFDIMFVNGEQLLALPLRERRRRLKEVFPETRPGYLEYAKEITVGAEEASLNNHDTLSRINAFLEEAFQSSCEGIMVKSLDVNAGYCPTKRSDSWLKVKRDYVDGLGDTLDLVPIGAWYGNGRKAGWYSPFLMACFNPETEEFQSVCRVMSGFSDAFYIEMKEFYSEDKILAKKPPYYRTGETPDMWFSAEVVWEIRGADFTVSPVHSASLGLVHPSRGISVRFPRFISKVTDRNPEECSTATDIAEMFHAQTRKMNITSQH</sequence>
<keyword id="KW-0067">ATP-binding</keyword>
<keyword id="KW-0227">DNA damage</keyword>
<keyword id="KW-0233">DNA recombination</keyword>
<keyword id="KW-0234">DNA repair</keyword>
<keyword id="KW-0235">DNA replication</keyword>
<keyword id="KW-0436">Ligase</keyword>
<keyword id="KW-0460">Magnesium</keyword>
<keyword id="KW-0479">Metal-binding</keyword>
<keyword id="KW-0547">Nucleotide-binding</keyword>
<keyword id="KW-0539">Nucleus</keyword>
<keyword id="KW-1185">Reference proteome</keyword>
<evidence type="ECO:0000250" key="1"/>
<evidence type="ECO:0000250" key="2">
    <source>
        <dbReference type="UniProtKB" id="P18858"/>
    </source>
</evidence>
<evidence type="ECO:0000250" key="3">
    <source>
        <dbReference type="UniProtKB" id="P56709"/>
    </source>
</evidence>
<evidence type="ECO:0000255" key="4"/>
<evidence type="ECO:0000255" key="5">
    <source>
        <dbReference type="PROSITE-ProRule" id="PRU00768"/>
    </source>
</evidence>
<evidence type="ECO:0000255" key="6">
    <source>
        <dbReference type="PROSITE-ProRule" id="PRU10135"/>
    </source>
</evidence>
<evidence type="ECO:0000256" key="7">
    <source>
        <dbReference type="SAM" id="MobiDB-lite"/>
    </source>
</evidence>
<evidence type="ECO:0000269" key="8">
    <source>
    </source>
</evidence>
<evidence type="ECO:0000269" key="9">
    <source>
    </source>
</evidence>
<evidence type="ECO:0000269" key="10">
    <source>
    </source>
</evidence>
<evidence type="ECO:0000269" key="11">
    <source>
    </source>
</evidence>
<evidence type="ECO:0000303" key="12">
    <source>
    </source>
</evidence>
<evidence type="ECO:0000303" key="13">
    <source>
    </source>
</evidence>
<evidence type="ECO:0000303" key="14">
    <source>
    </source>
</evidence>
<evidence type="ECO:0000305" key="15"/>
<evidence type="ECO:0000312" key="16">
    <source>
        <dbReference type="Araport" id="AT1G66730"/>
    </source>
</evidence>
<evidence type="ECO:0000312" key="17">
    <source>
        <dbReference type="EMBL" id="AAG60081.1"/>
    </source>
</evidence>
<proteinExistence type="evidence at transcript level"/>
<protein>
    <recommendedName>
        <fullName evidence="13">DNA ligase 6</fullName>
        <shortName evidence="13">AtLIG6</shortName>
        <shortName evidence="14">DNA ligase VI</shortName>
        <ecNumber evidence="3 6">6.5.1.1</ecNumber>
    </recommendedName>
    <alternativeName>
        <fullName evidence="12">Ligase 1</fullName>
    </alternativeName>
</protein>
<organism>
    <name type="scientific">Arabidopsis thaliana</name>
    <name type="common">Mouse-ear cress</name>
    <dbReference type="NCBI Taxonomy" id="3702"/>
    <lineage>
        <taxon>Eukaryota</taxon>
        <taxon>Viridiplantae</taxon>
        <taxon>Streptophyta</taxon>
        <taxon>Embryophyta</taxon>
        <taxon>Tracheophyta</taxon>
        <taxon>Spermatophyta</taxon>
        <taxon>Magnoliopsida</taxon>
        <taxon>eudicotyledons</taxon>
        <taxon>Gunneridae</taxon>
        <taxon>Pentapetalae</taxon>
        <taxon>rosids</taxon>
        <taxon>malvids</taxon>
        <taxon>Brassicales</taxon>
        <taxon>Brassicaceae</taxon>
        <taxon>Camelineae</taxon>
        <taxon>Arabidopsis</taxon>
    </lineage>
</organism>
<comment type="function">
    <text evidence="9 15">DNA ligase that seals nicks in double-stranded DNA during DNA replication, DNA recombination and DNA repair (Probable). Required to maintain seed viability (e.g. longevity and storability) and during seed germination, probably by repairing DNA damage accumulated during seed development, storage and/or imbibition. Facilitates seed germination in cold conditions (2 degrees Celsius) and under oxidative stress (e.g. menadione, a genotoxic agent). Involved in repair of X-ray-induced damage (PubMed:20584150).</text>
</comment>
<comment type="function">
    <text evidence="10">Limits stable root transformation by A.tumefaciens T-DNA.</text>
</comment>
<comment type="catalytic activity">
    <reaction evidence="3 6">
        <text>ATP + (deoxyribonucleotide)n-3'-hydroxyl + 5'-phospho-(deoxyribonucleotide)m = (deoxyribonucleotide)n+m + AMP + diphosphate.</text>
        <dbReference type="EC" id="6.5.1.1"/>
    </reaction>
</comment>
<comment type="cofactor">
    <cofactor evidence="3">
        <name>Mg(2+)</name>
        <dbReference type="ChEBI" id="CHEBI:18420"/>
    </cofactor>
</comment>
<comment type="subcellular location">
    <subcellularLocation>
        <location evidence="5">Nucleus</location>
    </subcellularLocation>
</comment>
<comment type="tissue specificity">
    <text evidence="9">Mostly expressed in buds and flowers, and, to a lower extent, in stems, leaves, siliques and seeds.</text>
</comment>
<comment type="induction">
    <text evidence="8 9 11">Induced by UV-C (PubMed:15155891). Induced during seed imbibition (PubMed:20584150). Induced slightly by bleomycin (BLM), a radiomimetic reagent that generates DNA double-strand breaks (DSBs) (PubMed:26074930).</text>
</comment>
<comment type="disruption phenotype">
    <text evidence="9 10">Normal vegetative growth and fertility. Slightly enhanced sensitivity to X-rays, leading to a slight root growth reduction after 100-Gy dose of X-ray irradiation. Delayed germination of seeds, especially upon cold and oxidative stress (e.g. by menadione, a genotoxic agent), and reduced seed longevity and storability. Increased DNA damage response in germinating seeds, probably due to accumulation of DNA damage in seeds (PubMed:20584150). Increased stable root transformation susceptibility by A.tumefaciens A208 T-DNA (PubMed:25641249).</text>
</comment>
<comment type="similarity">
    <text evidence="15">Belongs to the ATP-dependent DNA ligase family.</text>
</comment>
<comment type="sequence caution" evidence="15">
    <conflict type="erroneous gene model prediction">
        <sequence resource="EMBL-CDS" id="AAG60081"/>
    </conflict>
</comment>
<accession>F4HPZ9</accession>
<accession>Q9C9M5</accession>